<reference key="1">
    <citation type="journal article" date="2006" name="Nature">
        <title>Analysis of the DNA sequence and duplication history of human chromosome 15.</title>
        <authorList>
            <person name="Zody M.C."/>
            <person name="Garber M."/>
            <person name="Sharpe T."/>
            <person name="Young S.K."/>
            <person name="Rowen L."/>
            <person name="O'Neill K."/>
            <person name="Whittaker C.A."/>
            <person name="Kamal M."/>
            <person name="Chang J.L."/>
            <person name="Cuomo C.A."/>
            <person name="Dewar K."/>
            <person name="FitzGerald M.G."/>
            <person name="Kodira C.D."/>
            <person name="Madan A."/>
            <person name="Qin S."/>
            <person name="Yang X."/>
            <person name="Abbasi N."/>
            <person name="Abouelleil A."/>
            <person name="Arachchi H.M."/>
            <person name="Baradarani L."/>
            <person name="Birditt B."/>
            <person name="Bloom S."/>
            <person name="Bloom T."/>
            <person name="Borowsky M.L."/>
            <person name="Burke J."/>
            <person name="Butler J."/>
            <person name="Cook A."/>
            <person name="DeArellano K."/>
            <person name="DeCaprio D."/>
            <person name="Dorris L. III"/>
            <person name="Dors M."/>
            <person name="Eichler E.E."/>
            <person name="Engels R."/>
            <person name="Fahey J."/>
            <person name="Fleetwood P."/>
            <person name="Friedman C."/>
            <person name="Gearin G."/>
            <person name="Hall J.L."/>
            <person name="Hensley G."/>
            <person name="Johnson E."/>
            <person name="Jones C."/>
            <person name="Kamat A."/>
            <person name="Kaur A."/>
            <person name="Locke D.P."/>
            <person name="Madan A."/>
            <person name="Munson G."/>
            <person name="Jaffe D.B."/>
            <person name="Lui A."/>
            <person name="Macdonald P."/>
            <person name="Mauceli E."/>
            <person name="Naylor J.W."/>
            <person name="Nesbitt R."/>
            <person name="Nicol R."/>
            <person name="O'Leary S.B."/>
            <person name="Ratcliffe A."/>
            <person name="Rounsley S."/>
            <person name="She X."/>
            <person name="Sneddon K.M.B."/>
            <person name="Stewart S."/>
            <person name="Sougnez C."/>
            <person name="Stone S.M."/>
            <person name="Topham K."/>
            <person name="Vincent D."/>
            <person name="Wang S."/>
            <person name="Zimmer A.R."/>
            <person name="Birren B.W."/>
            <person name="Hood L."/>
            <person name="Lander E.S."/>
            <person name="Nusbaum C."/>
        </authorList>
    </citation>
    <scope>NUCLEOTIDE SEQUENCE [LARGE SCALE GENOMIC DNA]</scope>
</reference>
<reference key="2">
    <citation type="journal article" date="2004" name="Genome Res.">
        <title>The status, quality, and expansion of the NIH full-length cDNA project: the Mammalian Gene Collection (MGC).</title>
        <authorList>
            <consortium name="The MGC Project Team"/>
        </authorList>
    </citation>
    <scope>NUCLEOTIDE SEQUENCE [LARGE SCALE MRNA]</scope>
    <source>
        <tissue>Testis</tissue>
    </source>
</reference>
<reference key="3">
    <citation type="journal article" date="2020" name="J. Med. Genet.">
        <title>Homozygous mutations in REC114 cause female infertility characterised by multiple pronuclei formation and early embryonic arrest.</title>
        <authorList>
            <person name="Wang W."/>
            <person name="Dong J."/>
            <person name="Chen B."/>
            <person name="Du J."/>
            <person name="Kuang Y."/>
            <person name="Sun X."/>
            <person name="Fu J."/>
            <person name="Li B."/>
            <person name="Mu J."/>
            <person name="Zhang Z."/>
            <person name="Zhou Z."/>
            <person name="Lin Z."/>
            <person name="Wu L."/>
            <person name="Yan Z."/>
            <person name="Mao X."/>
            <person name="Li Q."/>
            <person name="He L."/>
            <person name="Wang L."/>
            <person name="Sang Q."/>
        </authorList>
    </citation>
    <scope>INVOLVEMENT IN OZEMA10</scope>
    <scope>VARIANT OZEMA10 GLY-133</scope>
    <scope>CHARACTERIZATION OF VARIANT OZEMA10 GLY-133</scope>
    <scope>INTERACTION WITH IHO1 AND MEI4</scope>
</reference>
<reference key="4">
    <citation type="journal article" date="2023" name="Clin. Genet.">
        <title>A bi-allelic REC114 loss-of-function variant causes meiotic arrest and nonobstructive azoospermia.</title>
        <authorList>
            <person name="Xu S."/>
            <person name="Zhao J."/>
            <person name="Gao F."/>
            <person name="Zhang Y."/>
            <person name="Luo J."/>
            <person name="Zhang C."/>
            <person name="Tian R."/>
            <person name="Zhi E."/>
            <person name="Zhang J."/>
            <person name="Bai F."/>
            <person name="Sun H."/>
            <person name="Zhao F."/>
            <person name="Huang Y."/>
            <person name="Li P."/>
            <person name="Jiang L."/>
            <person name="Li Z."/>
            <person name="Yao C."/>
            <person name="Zhou Z."/>
        </authorList>
    </citation>
    <scope>VARIANT 190-GLN--ASN-266 DEL</scope>
    <scope>CHARACTERIZATION OF VARIANT 190-GLN--ASN-266 DEL</scope>
    <scope>FUNCTION</scope>
    <scope>INTERACTION WITH MEI4</scope>
</reference>
<sequence length="266" mass="29155">MAEAGKVPLSLGLTGGEAAEWPLQRYARCIPSNTRDPPGPCLEAGTAPCPTWKVFDSNEESGYLVLTIVISGHFFIFQGQTLLEGFSLIGSKDWLKIVRRVDCLLFGTTIKDKSRLFRVQFSGESKEQALEHCCSCVQKLAQYITVQVPDGNIQELQLIPGPPRATESQGKDSAKSVPRQPGSHQHSEQQQVCVTAGTGAPDGRTSLTQLAQTLLASEELPHVYEQSAWGAEELGPFLRLCLMDQNFPAFVEEVEKELKKLAGLRN</sequence>
<accession>Q7Z4M0</accession>
<dbReference type="EMBL" id="AC009660">
    <property type="status" value="NOT_ANNOTATED_CDS"/>
    <property type="molecule type" value="Genomic_DNA"/>
</dbReference>
<dbReference type="EMBL" id="AC022735">
    <property type="status" value="NOT_ANNOTATED_CDS"/>
    <property type="molecule type" value="Genomic_DNA"/>
</dbReference>
<dbReference type="EMBL" id="BC055412">
    <property type="protein sequence ID" value="AAH55412.1"/>
    <property type="status" value="ALT_INIT"/>
    <property type="molecule type" value="mRNA"/>
</dbReference>
<dbReference type="CCDS" id="CCDS45296.1"/>
<dbReference type="RefSeq" id="NP_001035826.1">
    <property type="nucleotide sequence ID" value="NM_001042367.2"/>
</dbReference>
<dbReference type="SMR" id="Q7Z4M0"/>
<dbReference type="BioGRID" id="129640">
    <property type="interactions" value="1"/>
</dbReference>
<dbReference type="ComplexPortal" id="CPX-2358">
    <property type="entry name" value="CCDC36-MEI4-REC114 meiotic recombination initiation complex"/>
</dbReference>
<dbReference type="FunCoup" id="Q7Z4M0">
    <property type="interactions" value="3"/>
</dbReference>
<dbReference type="IntAct" id="Q7Z4M0">
    <property type="interactions" value="2"/>
</dbReference>
<dbReference type="STRING" id="9606.ENSP00000328423"/>
<dbReference type="iPTMnet" id="Q7Z4M0"/>
<dbReference type="PhosphoSitePlus" id="Q7Z4M0"/>
<dbReference type="BioMuta" id="REC114"/>
<dbReference type="DMDM" id="190358937"/>
<dbReference type="MassIVE" id="Q7Z4M0"/>
<dbReference type="PaxDb" id="9606-ENSP00000328423"/>
<dbReference type="PeptideAtlas" id="Q7Z4M0"/>
<dbReference type="ProteomicsDB" id="69211"/>
<dbReference type="DNASU" id="283677"/>
<dbReference type="Ensembl" id="ENST00000331090.11">
    <property type="protein sequence ID" value="ENSP00000328423.6"/>
    <property type="gene ID" value="ENSG00000183324.11"/>
</dbReference>
<dbReference type="GeneID" id="283677"/>
<dbReference type="KEGG" id="hsa:283677"/>
<dbReference type="MANE-Select" id="ENST00000331090.11">
    <property type="protein sequence ID" value="ENSP00000328423.6"/>
    <property type="RefSeq nucleotide sequence ID" value="NM_001042367.2"/>
    <property type="RefSeq protein sequence ID" value="NP_001035826.1"/>
</dbReference>
<dbReference type="UCSC" id="uc002avq.4">
    <property type="organism name" value="human"/>
</dbReference>
<dbReference type="AGR" id="HGNC:25065"/>
<dbReference type="CTD" id="283677"/>
<dbReference type="DisGeNET" id="283677"/>
<dbReference type="GeneCards" id="REC114"/>
<dbReference type="HGNC" id="HGNC:25065">
    <property type="gene designation" value="REC114"/>
</dbReference>
<dbReference type="HPA" id="ENSG00000183324">
    <property type="expression patterns" value="Tissue enriched (testis)"/>
</dbReference>
<dbReference type="MalaCards" id="REC114"/>
<dbReference type="MIM" id="618421">
    <property type="type" value="gene"/>
</dbReference>
<dbReference type="MIM" id="619176">
    <property type="type" value="phenotype"/>
</dbReference>
<dbReference type="neXtProt" id="NX_Q7Z4M0"/>
<dbReference type="OpenTargets" id="ENSG00000183324"/>
<dbReference type="PharmGKB" id="PA162378269"/>
<dbReference type="VEuPathDB" id="HostDB:ENSG00000183324"/>
<dbReference type="eggNOG" id="ENOG502S157">
    <property type="taxonomic scope" value="Eukaryota"/>
</dbReference>
<dbReference type="GeneTree" id="ENSGT00390000007235"/>
<dbReference type="HOGENOM" id="CLU_101822_0_0_1"/>
<dbReference type="InParanoid" id="Q7Z4M0"/>
<dbReference type="OMA" id="RYGRFML"/>
<dbReference type="OrthoDB" id="6479200at2759"/>
<dbReference type="PAN-GO" id="Q7Z4M0">
    <property type="GO annotations" value="0 GO annotations based on evolutionary models"/>
</dbReference>
<dbReference type="PhylomeDB" id="Q7Z4M0"/>
<dbReference type="TreeFam" id="TF332765"/>
<dbReference type="PathwayCommons" id="Q7Z4M0"/>
<dbReference type="SignaLink" id="Q7Z4M0"/>
<dbReference type="BioGRID-ORCS" id="283677">
    <property type="hits" value="5 hits in 1141 CRISPR screens"/>
</dbReference>
<dbReference type="ChiTaRS" id="REC114">
    <property type="organism name" value="human"/>
</dbReference>
<dbReference type="GenomeRNAi" id="283677"/>
<dbReference type="Pharos" id="Q7Z4M0">
    <property type="development level" value="Tdark"/>
</dbReference>
<dbReference type="PRO" id="PR:Q7Z4M0"/>
<dbReference type="Proteomes" id="UP000005640">
    <property type="component" value="Chromosome 15"/>
</dbReference>
<dbReference type="RNAct" id="Q7Z4M0">
    <property type="molecule type" value="protein"/>
</dbReference>
<dbReference type="Bgee" id="ENSG00000183324">
    <property type="expression patterns" value="Expressed in oocyte and 80 other cell types or tissues"/>
</dbReference>
<dbReference type="ExpressionAtlas" id="Q7Z4M0">
    <property type="expression patterns" value="baseline and differential"/>
</dbReference>
<dbReference type="GO" id="GO:0005694">
    <property type="term" value="C:chromosome"/>
    <property type="evidence" value="ECO:0000250"/>
    <property type="project" value="UniProtKB"/>
</dbReference>
<dbReference type="GO" id="GO:0006310">
    <property type="term" value="P:DNA recombination"/>
    <property type="evidence" value="ECO:0007669"/>
    <property type="project" value="UniProtKB-KW"/>
</dbReference>
<dbReference type="GO" id="GO:0042138">
    <property type="term" value="P:meiotic DNA double-strand break formation"/>
    <property type="evidence" value="ECO:0000250"/>
    <property type="project" value="UniProtKB"/>
</dbReference>
<dbReference type="GO" id="GO:0048477">
    <property type="term" value="P:oogenesis"/>
    <property type="evidence" value="ECO:0000250"/>
    <property type="project" value="UniProtKB"/>
</dbReference>
<dbReference type="GO" id="GO:0007283">
    <property type="term" value="P:spermatogenesis"/>
    <property type="evidence" value="ECO:0000250"/>
    <property type="project" value="UniProtKB"/>
</dbReference>
<dbReference type="InterPro" id="IPR029168">
    <property type="entry name" value="REC114L"/>
</dbReference>
<dbReference type="PANTHER" id="PTHR34921">
    <property type="entry name" value="MEIOTIC RECOMBINATION PROTEIN REC114"/>
    <property type="match status" value="1"/>
</dbReference>
<dbReference type="PANTHER" id="PTHR34921:SF1">
    <property type="entry name" value="MEIOTIC RECOMBINATION PROTEIN REC114"/>
    <property type="match status" value="1"/>
</dbReference>
<dbReference type="Pfam" id="PF15165">
    <property type="entry name" value="REC114-like"/>
    <property type="match status" value="1"/>
</dbReference>
<comment type="function">
    <text evidence="1 4">Required for DNA double-strand breaks (DSBs) formation in unsynapsed regions during meiotic recombination (PubMed:38148155). Probably acts by forming a complex with IHO1 and MEI4, which activates DSBs formation in unsynapsed regions, an essential step to ensure completion of synapsis (By similarity). Required for spermatogenesis (PubMed:38148155). Required for oogenesis.</text>
</comment>
<comment type="subunit">
    <text evidence="1 3 4">Part of the MCD recombinosome complex, at least composed of IHO1, REC114 and MEI4 (By similarity). Forms a complex with MEI4; the interaction is required for MEI4 stability (PubMed:31704776). Interacts (via C-terminal domain) with MEI4 (via N-terminal domain) (PubMed:38148155). Interacts with IHO1 (PubMed:31704776). Interacts with ANKRD31; the interaction is direct (By similarity).</text>
</comment>
<comment type="interaction">
    <interactant intactId="EBI-25600376">
        <id>Q7Z4M0</id>
    </interactant>
    <interactant intactId="EBI-19944212">
        <id>A8MW99</id>
        <label>MEI4</label>
    </interactant>
    <organismsDiffer>false</organismsDiffer>
    <experiments>3</experiments>
</comment>
<comment type="subcellular location">
    <subcellularLocation>
        <location evidence="1">Chromosome</location>
    </subcellularLocation>
    <text evidence="1">Located in discrete foci on the axes of meiotic chromosomes. The number of foci is highest at leptonema and decreases at zygonema.</text>
</comment>
<comment type="disease" evidence="3">
    <disease id="DI-06030">
        <name>Oocyte/zygote/embryo maturation arrest 10</name>
        <acronym>OZEMA10</acronym>
        <description>An autosomal recessive infertility disorder due to abnormal fertilization of mature oocytes, with development of multiple pronuclei or absent pronucleus, and early embryonic arrest.</description>
        <dbReference type="MIM" id="619176"/>
    </disease>
    <text>The gene represented in this entry is involved in disease pathogenesis.</text>
</comment>
<comment type="similarity">
    <text evidence="5">Belongs to the REC114 family.</text>
</comment>
<comment type="sequence caution" evidence="5">
    <conflict type="erroneous initiation">
        <sequence resource="EMBL-CDS" id="AAH55412"/>
    </conflict>
    <text>Extended N-terminus.</text>
</comment>
<gene>
    <name type="primary">REC114</name>
    <name type="synonym">C15orf60</name>
</gene>
<evidence type="ECO:0000250" key="1">
    <source>
        <dbReference type="UniProtKB" id="Q9CWH4"/>
    </source>
</evidence>
<evidence type="ECO:0000256" key="2">
    <source>
        <dbReference type="SAM" id="MobiDB-lite"/>
    </source>
</evidence>
<evidence type="ECO:0000269" key="3">
    <source>
    </source>
</evidence>
<evidence type="ECO:0000269" key="4">
    <source>
    </source>
</evidence>
<evidence type="ECO:0000305" key="5"/>
<protein>
    <recommendedName>
        <fullName>Meiotic recombination protein REC114</fullName>
    </recommendedName>
</protein>
<proteinExistence type="evidence at protein level"/>
<organism>
    <name type="scientific">Homo sapiens</name>
    <name type="common">Human</name>
    <dbReference type="NCBI Taxonomy" id="9606"/>
    <lineage>
        <taxon>Eukaryota</taxon>
        <taxon>Metazoa</taxon>
        <taxon>Chordata</taxon>
        <taxon>Craniata</taxon>
        <taxon>Vertebrata</taxon>
        <taxon>Euteleostomi</taxon>
        <taxon>Mammalia</taxon>
        <taxon>Eutheria</taxon>
        <taxon>Euarchontoglires</taxon>
        <taxon>Primates</taxon>
        <taxon>Haplorrhini</taxon>
        <taxon>Catarrhini</taxon>
        <taxon>Hominidae</taxon>
        <taxon>Homo</taxon>
    </lineage>
</organism>
<keyword id="KW-0158">Chromosome</keyword>
<keyword id="KW-0221">Differentiation</keyword>
<keyword id="KW-0225">Disease variant</keyword>
<keyword id="KW-0233">DNA recombination</keyword>
<keyword id="KW-0469">Meiosis</keyword>
<keyword id="KW-0896">Oogenesis</keyword>
<keyword id="KW-1267">Proteomics identification</keyword>
<keyword id="KW-1185">Reference proteome</keyword>
<keyword id="KW-0744">Spermatogenesis</keyword>
<name>RE114_HUMAN</name>
<feature type="chain" id="PRO_0000321518" description="Meiotic recombination protein REC114">
    <location>
        <begin position="1"/>
        <end position="266"/>
    </location>
</feature>
<feature type="region of interest" description="Disordered" evidence="2">
    <location>
        <begin position="157"/>
        <end position="190"/>
    </location>
</feature>
<feature type="region of interest" description="Interaction with MEI4" evidence="4">
    <location>
        <begin position="210"/>
        <end position="261"/>
    </location>
</feature>
<feature type="sequence variant" id="VAR_085251" description="In OZEMA10; uncertain significance; decreases protein level; does not affect interaction with MEI4 and IHO1; decreases MEI4 stability; dbSNP:rs1894381872." evidence="3">
    <original>C</original>
    <variation>G</variation>
    <location>
        <position position="133"/>
    </location>
</feature>
<feature type="sequence variant" id="VAR_050893" description="In dbSNP:rs12102004.">
    <original>V</original>
    <variation>M</variation>
    <location>
        <position position="148"/>
    </location>
</feature>
<feature type="sequence variant" id="VAR_088948" description="Found in a patient with non-obstructive azoospermia; likely pathogenic; impairs interaction with MEI4; results in spermatocyte arrest in meiosis at the zygotene stage." evidence="4">
    <location>
        <begin position="190"/>
        <end position="266"/>
    </location>
</feature>